<protein>
    <recommendedName>
        <fullName>B-lymphocyte antigen CD19</fullName>
    </recommendedName>
    <alternativeName>
        <fullName>Differentiation antigen CD19</fullName>
    </alternativeName>
    <cdAntigenName>CD19</cdAntigenName>
</protein>
<accession>P25918</accession>
<accession>Q542B2</accession>
<keyword id="KW-1064">Adaptive immunity</keyword>
<keyword id="KW-1003">Cell membrane</keyword>
<keyword id="KW-1015">Disulfide bond</keyword>
<keyword id="KW-0325">Glycoprotein</keyword>
<keyword id="KW-0391">Immunity</keyword>
<keyword id="KW-0393">Immunoglobulin domain</keyword>
<keyword id="KW-0472">Membrane</keyword>
<keyword id="KW-0597">Phosphoprotein</keyword>
<keyword id="KW-1185">Reference proteome</keyword>
<keyword id="KW-0677">Repeat</keyword>
<keyword id="KW-0732">Signal</keyword>
<keyword id="KW-0812">Transmembrane</keyword>
<keyword id="KW-1133">Transmembrane helix</keyword>
<name>CD19_MOUSE</name>
<feature type="signal peptide">
    <location>
        <begin position="1"/>
        <end position="16"/>
    </location>
</feature>
<feature type="propeptide" id="PRO_0000014649" evidence="2">
    <location>
        <begin position="17"/>
        <end position="18"/>
    </location>
</feature>
<feature type="chain" id="PRO_0000014650" description="B-lymphocyte antigen CD19">
    <location>
        <begin position="19"/>
        <end position="547"/>
    </location>
</feature>
<feature type="topological domain" description="Extracellular" evidence="2">
    <location>
        <begin position="19"/>
        <end position="287"/>
    </location>
</feature>
<feature type="transmembrane region" description="Helical" evidence="2">
    <location>
        <begin position="288"/>
        <end position="311"/>
    </location>
</feature>
<feature type="topological domain" description="Cytoplasmic" evidence="2">
    <location>
        <begin position="312"/>
        <end position="547"/>
    </location>
</feature>
<feature type="domain" description="Ig-like C2-type 1">
    <location>
        <begin position="20"/>
        <end position="113"/>
    </location>
</feature>
<feature type="domain" description="Ig-like C2-type 2">
    <location>
        <begin position="171"/>
        <end position="271"/>
    </location>
</feature>
<feature type="region of interest" description="Disordered" evidence="3">
    <location>
        <begin position="330"/>
        <end position="355"/>
    </location>
</feature>
<feature type="region of interest" description="Disordered" evidence="3">
    <location>
        <begin position="376"/>
        <end position="461"/>
    </location>
</feature>
<feature type="region of interest" description="Disordered" evidence="3">
    <location>
        <begin position="472"/>
        <end position="491"/>
    </location>
</feature>
<feature type="region of interest" description="Disordered" evidence="3">
    <location>
        <begin position="505"/>
        <end position="547"/>
    </location>
</feature>
<feature type="compositionally biased region" description="Polar residues" evidence="3">
    <location>
        <begin position="337"/>
        <end position="355"/>
    </location>
</feature>
<feature type="compositionally biased region" description="Acidic residues" evidence="3">
    <location>
        <begin position="395"/>
        <end position="415"/>
    </location>
</feature>
<feature type="compositionally biased region" description="Polar residues" evidence="3">
    <location>
        <begin position="416"/>
        <end position="429"/>
    </location>
</feature>
<feature type="compositionally biased region" description="Acidic residues" evidence="3">
    <location>
        <begin position="434"/>
        <end position="447"/>
    </location>
</feature>
<feature type="modified residue" description="Phosphoserine" evidence="5">
    <location>
        <position position="225"/>
    </location>
</feature>
<feature type="modified residue" description="Phosphotyrosine" evidence="1">
    <location>
        <position position="346"/>
    </location>
</feature>
<feature type="modified residue" description="Phosphotyrosine" evidence="1">
    <location>
        <position position="376"/>
    </location>
</feature>
<feature type="modified residue" description="Phosphotyrosine" evidence="6">
    <location>
        <position position="402"/>
    </location>
</feature>
<feature type="modified residue" description="Phosphotyrosine" evidence="1">
    <location>
        <position position="432"/>
    </location>
</feature>
<feature type="modified residue" description="Phosphotyrosine" evidence="6 12">
    <location>
        <position position="493"/>
    </location>
</feature>
<feature type="modified residue" description="Phosphotyrosine" evidence="6">
    <location>
        <position position="522"/>
    </location>
</feature>
<feature type="glycosylation site" description="N-linked (GlcNAc...) asparagine">
    <location>
        <position position="56"/>
    </location>
</feature>
<feature type="glycosylation site" description="N-linked (GlcNAc...) asparagine" evidence="2">
    <location>
        <position position="86"/>
    </location>
</feature>
<feature type="glycosylation site" description="N-linked (GlcNAc...) asparagine" evidence="2">
    <location>
        <position position="125"/>
    </location>
</feature>
<feature type="glycosylation site" description="N-linked (GlcNAc...) asparagine" evidence="2">
    <location>
        <position position="138"/>
    </location>
</feature>
<feature type="glycosylation site" description="N-linked (GlcNAc...) asparagine" evidence="2">
    <location>
        <position position="177"/>
    </location>
</feature>
<feature type="glycosylation site" description="N-linked (GlcNAc...) asparagine" evidence="2">
    <location>
        <position position="220"/>
    </location>
</feature>
<feature type="glycosylation site" description="N-linked (GlcNAc...) asparagine" evidence="2">
    <location>
        <position position="263"/>
    </location>
</feature>
<feature type="disulfide bond" evidence="1">
    <location>
        <begin position="38"/>
        <end position="259"/>
    </location>
</feature>
<feature type="disulfide bond" evidence="1">
    <location>
        <begin position="97"/>
        <end position="197"/>
    </location>
</feature>
<feature type="disulfide bond" evidence="1">
    <location>
        <begin position="134"/>
        <end position="169"/>
    </location>
</feature>
<feature type="sequence conflict" description="In Ref. 2; AAA37390." evidence="11" ref="2">
    <original>G</original>
    <variation>A</variation>
    <location>
        <position position="207"/>
    </location>
</feature>
<gene>
    <name type="primary">Cd19</name>
</gene>
<dbReference type="EMBL" id="M62542">
    <property type="protein sequence ID" value="AAA37388.1"/>
    <property type="molecule type" value="Genomic_DNA"/>
</dbReference>
<dbReference type="EMBL" id="M62553">
    <property type="protein sequence ID" value="AAA37390.1"/>
    <property type="molecule type" value="Genomic_DNA"/>
</dbReference>
<dbReference type="EMBL" id="M62551">
    <property type="protein sequence ID" value="AAA37390.1"/>
    <property type="status" value="JOINED"/>
    <property type="molecule type" value="Genomic_DNA"/>
</dbReference>
<dbReference type="EMBL" id="M62552">
    <property type="protein sequence ID" value="AAA37390.1"/>
    <property type="status" value="JOINED"/>
    <property type="molecule type" value="Genomic_DNA"/>
</dbReference>
<dbReference type="EMBL" id="AK089835">
    <property type="protein sequence ID" value="BAC40973.1"/>
    <property type="molecule type" value="mRNA"/>
</dbReference>
<dbReference type="EMBL" id="CH466531">
    <property type="protein sequence ID" value="EDL17351.1"/>
    <property type="molecule type" value="Genomic_DNA"/>
</dbReference>
<dbReference type="EMBL" id="M28240">
    <property type="protein sequence ID" value="AAA74753.1"/>
    <property type="molecule type" value="Genomic_DNA"/>
</dbReference>
<dbReference type="EMBL" id="M84372">
    <property type="protein sequence ID" value="AAA37389.1"/>
    <property type="molecule type" value="Genomic_DNA"/>
</dbReference>
<dbReference type="CCDS" id="CCDS21828.1"/>
<dbReference type="PIR" id="B45808">
    <property type="entry name" value="B45808"/>
</dbReference>
<dbReference type="RefSeq" id="NP_033974.2">
    <property type="nucleotide sequence ID" value="NM_009844.3"/>
</dbReference>
<dbReference type="RefSeq" id="XP_006507346.1">
    <property type="nucleotide sequence ID" value="XM_006507283.2"/>
</dbReference>
<dbReference type="SMR" id="P25918"/>
<dbReference type="BioGRID" id="198576">
    <property type="interactions" value="1"/>
</dbReference>
<dbReference type="FunCoup" id="P25918">
    <property type="interactions" value="529"/>
</dbReference>
<dbReference type="IntAct" id="P25918">
    <property type="interactions" value="3"/>
</dbReference>
<dbReference type="STRING" id="10090.ENSMUSP00000145803"/>
<dbReference type="GlyCosmos" id="P25918">
    <property type="glycosylation" value="7 sites, No reported glycans"/>
</dbReference>
<dbReference type="GlyGen" id="P25918">
    <property type="glycosylation" value="7 sites"/>
</dbReference>
<dbReference type="iPTMnet" id="P25918"/>
<dbReference type="PhosphoSitePlus" id="P25918"/>
<dbReference type="PaxDb" id="10090-ENSMUSP00000032968"/>
<dbReference type="PeptideAtlas" id="P25918"/>
<dbReference type="ProteomicsDB" id="281513"/>
<dbReference type="ABCD" id="P25918">
    <property type="antibodies" value="8 sequenced antibodies"/>
</dbReference>
<dbReference type="Antibodypedia" id="4237">
    <property type="antibodies" value="5337 antibodies from 56 providers"/>
</dbReference>
<dbReference type="DNASU" id="12478"/>
<dbReference type="Ensembl" id="ENSMUST00000206325.2">
    <property type="protein sequence ID" value="ENSMUSP00000145803.2"/>
    <property type="gene ID" value="ENSMUSG00000030724.8"/>
</dbReference>
<dbReference type="GeneID" id="12478"/>
<dbReference type="KEGG" id="mmu:12478"/>
<dbReference type="UCSC" id="uc009jrb.1">
    <property type="organism name" value="mouse"/>
</dbReference>
<dbReference type="AGR" id="MGI:88319"/>
<dbReference type="CTD" id="930"/>
<dbReference type="MGI" id="MGI:88319">
    <property type="gene designation" value="Cd19"/>
</dbReference>
<dbReference type="VEuPathDB" id="HostDB:ENSMUSG00000030724"/>
<dbReference type="eggNOG" id="ENOG502STG8">
    <property type="taxonomic scope" value="Eukaryota"/>
</dbReference>
<dbReference type="GeneTree" id="ENSGT00390000014991"/>
<dbReference type="HOGENOM" id="CLU_038774_0_0_1"/>
<dbReference type="InParanoid" id="P25918"/>
<dbReference type="OMA" id="ENMENPE"/>
<dbReference type="OrthoDB" id="9449216at2759"/>
<dbReference type="TreeFam" id="TF338293"/>
<dbReference type="Reactome" id="R-MMU-1257604">
    <property type="pathway name" value="PIP3 activates AKT signaling"/>
</dbReference>
<dbReference type="Reactome" id="R-MMU-198933">
    <property type="pathway name" value="Immunoregulatory interactions between a Lymphoid and a non-Lymphoid cell"/>
</dbReference>
<dbReference type="Reactome" id="R-MMU-6811558">
    <property type="pathway name" value="PI5P, PP2A and IER3 Regulate PI3K/AKT Signaling"/>
</dbReference>
<dbReference type="Reactome" id="R-MMU-977606">
    <property type="pathway name" value="Regulation of Complement cascade"/>
</dbReference>
<dbReference type="Reactome" id="R-MMU-983695">
    <property type="pathway name" value="Antigen activates B Cell Receptor (BCR) leading to generation of second messengers"/>
</dbReference>
<dbReference type="BioGRID-ORCS" id="12478">
    <property type="hits" value="3 hits in 79 CRISPR screens"/>
</dbReference>
<dbReference type="ChiTaRS" id="Cd19">
    <property type="organism name" value="mouse"/>
</dbReference>
<dbReference type="PRO" id="PR:P25918"/>
<dbReference type="Proteomes" id="UP000000589">
    <property type="component" value="Chromosome 7"/>
</dbReference>
<dbReference type="RNAct" id="P25918">
    <property type="molecule type" value="protein"/>
</dbReference>
<dbReference type="Bgee" id="ENSMUSG00000030724">
    <property type="expression patterns" value="Expressed in peripheral lymph node and 45 other cell types or tissues"/>
</dbReference>
<dbReference type="ExpressionAtlas" id="P25918">
    <property type="expression patterns" value="baseline and differential"/>
</dbReference>
<dbReference type="GO" id="GO:0009897">
    <property type="term" value="C:external side of plasma membrane"/>
    <property type="evidence" value="ECO:0000314"/>
    <property type="project" value="MGI"/>
</dbReference>
<dbReference type="GO" id="GO:0045121">
    <property type="term" value="C:membrane raft"/>
    <property type="evidence" value="ECO:0007669"/>
    <property type="project" value="UniProtKB-SubCell"/>
</dbReference>
<dbReference type="GO" id="GO:0005886">
    <property type="term" value="C:plasma membrane"/>
    <property type="evidence" value="ECO:0000314"/>
    <property type="project" value="UniProtKB"/>
</dbReference>
<dbReference type="GO" id="GO:0032991">
    <property type="term" value="C:protein-containing complex"/>
    <property type="evidence" value="ECO:0000266"/>
    <property type="project" value="MGI"/>
</dbReference>
<dbReference type="GO" id="GO:0050851">
    <property type="term" value="P:antigen receptor-mediated signaling pathway"/>
    <property type="evidence" value="ECO:0000250"/>
    <property type="project" value="UniProtKB"/>
</dbReference>
<dbReference type="GO" id="GO:0019724">
    <property type="term" value="P:B cell mediated immunity"/>
    <property type="evidence" value="ECO:0000315"/>
    <property type="project" value="UniProtKB"/>
</dbReference>
<dbReference type="GO" id="GO:0002322">
    <property type="term" value="P:B cell proliferation involved in immune response"/>
    <property type="evidence" value="ECO:0000250"/>
    <property type="project" value="UniProtKB"/>
</dbReference>
<dbReference type="GO" id="GO:0050853">
    <property type="term" value="P:B cell receptor signaling pathway"/>
    <property type="evidence" value="ECO:0000314"/>
    <property type="project" value="MGI"/>
</dbReference>
<dbReference type="GO" id="GO:0001923">
    <property type="term" value="P:B-1 B cell differentiation"/>
    <property type="evidence" value="ECO:0000315"/>
    <property type="project" value="UniProtKB"/>
</dbReference>
<dbReference type="GO" id="GO:0016064">
    <property type="term" value="P:immunoglobulin mediated immune response"/>
    <property type="evidence" value="ECO:0000250"/>
    <property type="project" value="UniProtKB"/>
</dbReference>
<dbReference type="GO" id="GO:0051897">
    <property type="term" value="P:positive regulation of phosphatidylinositol 3-kinase/protein kinase B signal transduction"/>
    <property type="evidence" value="ECO:0000315"/>
    <property type="project" value="UniProtKB"/>
</dbReference>
<dbReference type="GO" id="GO:0051281">
    <property type="term" value="P:positive regulation of release of sequestered calcium ion into cytosol"/>
    <property type="evidence" value="ECO:0000315"/>
    <property type="project" value="UniProtKB"/>
</dbReference>
<dbReference type="GO" id="GO:0050864">
    <property type="term" value="P:regulation of B cell activation"/>
    <property type="evidence" value="ECO:0000250"/>
    <property type="project" value="UniProtKB"/>
</dbReference>
<dbReference type="GO" id="GO:0050855">
    <property type="term" value="P:regulation of B cell receptor signaling pathway"/>
    <property type="evidence" value="ECO:0000315"/>
    <property type="project" value="UniProtKB"/>
</dbReference>
<dbReference type="CDD" id="cd23999">
    <property type="entry name" value="CD19_protodomain_1_2"/>
    <property type="match status" value="1"/>
</dbReference>
<dbReference type="Gene3D" id="2.60.40.10">
    <property type="entry name" value="Immunoglobulins"/>
    <property type="match status" value="1"/>
</dbReference>
<dbReference type="InterPro" id="IPR042341">
    <property type="entry name" value="CD19"/>
</dbReference>
<dbReference type="InterPro" id="IPR007110">
    <property type="entry name" value="Ig-like_dom"/>
</dbReference>
<dbReference type="InterPro" id="IPR036179">
    <property type="entry name" value="Ig-like_dom_sf"/>
</dbReference>
<dbReference type="InterPro" id="IPR013783">
    <property type="entry name" value="Ig-like_fold"/>
</dbReference>
<dbReference type="InterPro" id="IPR003599">
    <property type="entry name" value="Ig_sub"/>
</dbReference>
<dbReference type="PANTHER" id="PTHR16674">
    <property type="entry name" value="B-LYMPHOCYTE ANTIGEN CD19"/>
    <property type="match status" value="1"/>
</dbReference>
<dbReference type="PANTHER" id="PTHR16674:SF2">
    <property type="entry name" value="B-LYMPHOCYTE ANTIGEN CD19"/>
    <property type="match status" value="1"/>
</dbReference>
<dbReference type="SMART" id="SM00409">
    <property type="entry name" value="IG"/>
    <property type="match status" value="2"/>
</dbReference>
<dbReference type="SUPFAM" id="SSF48726">
    <property type="entry name" value="Immunoglobulin"/>
    <property type="match status" value="2"/>
</dbReference>
<dbReference type="PROSITE" id="PS50835">
    <property type="entry name" value="IG_LIKE"/>
    <property type="match status" value="2"/>
</dbReference>
<proteinExistence type="evidence at protein level"/>
<organism>
    <name type="scientific">Mus musculus</name>
    <name type="common">Mouse</name>
    <dbReference type="NCBI Taxonomy" id="10090"/>
    <lineage>
        <taxon>Eukaryota</taxon>
        <taxon>Metazoa</taxon>
        <taxon>Chordata</taxon>
        <taxon>Craniata</taxon>
        <taxon>Vertebrata</taxon>
        <taxon>Euteleostomi</taxon>
        <taxon>Mammalia</taxon>
        <taxon>Eutheria</taxon>
        <taxon>Euarchontoglires</taxon>
        <taxon>Glires</taxon>
        <taxon>Rodentia</taxon>
        <taxon>Myomorpha</taxon>
        <taxon>Muroidea</taxon>
        <taxon>Muridae</taxon>
        <taxon>Murinae</taxon>
        <taxon>Mus</taxon>
        <taxon>Mus</taxon>
    </lineage>
</organism>
<reference key="1">
    <citation type="journal article" date="1991" name="J. Immunol.">
        <title>Structure and domain organization of the CD19 antigen of human, mouse, and guinea pig B lymphocytes. Conservation of the extensive cytoplasmic domain.</title>
        <authorList>
            <person name="Zhou L.J."/>
            <person name="Ord D.C."/>
            <person name="Hughes A.L."/>
            <person name="Tedder T.F."/>
        </authorList>
    </citation>
    <scope>NUCLEOTIDE SEQUENCE [GENOMIC DNA]</scope>
    <source>
        <strain>BALB/cJ</strain>
        <tissue>Spleen</tissue>
    </source>
</reference>
<reference key="2">
    <citation type="journal article" date="1992" name="Immunogenetics">
        <title>Structure of the genes encoding the CD19 antigen of human and mouse B lymphocytes.</title>
        <authorList>
            <person name="Zhou L.J."/>
            <person name="Ord D.C."/>
            <person name="Omori S.A."/>
            <person name="Tedder T.F."/>
        </authorList>
    </citation>
    <scope>NUCLEOTIDE SEQUENCE [GENOMIC DNA]</scope>
    <source>
        <tissue>Spleen</tissue>
    </source>
</reference>
<reference key="3">
    <citation type="journal article" date="2005" name="Science">
        <title>The transcriptional landscape of the mammalian genome.</title>
        <authorList>
            <person name="Carninci P."/>
            <person name="Kasukawa T."/>
            <person name="Katayama S."/>
            <person name="Gough J."/>
            <person name="Frith M.C."/>
            <person name="Maeda N."/>
            <person name="Oyama R."/>
            <person name="Ravasi T."/>
            <person name="Lenhard B."/>
            <person name="Wells C."/>
            <person name="Kodzius R."/>
            <person name="Shimokawa K."/>
            <person name="Bajic V.B."/>
            <person name="Brenner S.E."/>
            <person name="Batalov S."/>
            <person name="Forrest A.R."/>
            <person name="Zavolan M."/>
            <person name="Davis M.J."/>
            <person name="Wilming L.G."/>
            <person name="Aidinis V."/>
            <person name="Allen J.E."/>
            <person name="Ambesi-Impiombato A."/>
            <person name="Apweiler R."/>
            <person name="Aturaliya R.N."/>
            <person name="Bailey T.L."/>
            <person name="Bansal M."/>
            <person name="Baxter L."/>
            <person name="Beisel K.W."/>
            <person name="Bersano T."/>
            <person name="Bono H."/>
            <person name="Chalk A.M."/>
            <person name="Chiu K.P."/>
            <person name="Choudhary V."/>
            <person name="Christoffels A."/>
            <person name="Clutterbuck D.R."/>
            <person name="Crowe M.L."/>
            <person name="Dalla E."/>
            <person name="Dalrymple B.P."/>
            <person name="de Bono B."/>
            <person name="Della Gatta G."/>
            <person name="di Bernardo D."/>
            <person name="Down T."/>
            <person name="Engstrom P."/>
            <person name="Fagiolini M."/>
            <person name="Faulkner G."/>
            <person name="Fletcher C.F."/>
            <person name="Fukushima T."/>
            <person name="Furuno M."/>
            <person name="Futaki S."/>
            <person name="Gariboldi M."/>
            <person name="Georgii-Hemming P."/>
            <person name="Gingeras T.R."/>
            <person name="Gojobori T."/>
            <person name="Green R.E."/>
            <person name="Gustincich S."/>
            <person name="Harbers M."/>
            <person name="Hayashi Y."/>
            <person name="Hensch T.K."/>
            <person name="Hirokawa N."/>
            <person name="Hill D."/>
            <person name="Huminiecki L."/>
            <person name="Iacono M."/>
            <person name="Ikeo K."/>
            <person name="Iwama A."/>
            <person name="Ishikawa T."/>
            <person name="Jakt M."/>
            <person name="Kanapin A."/>
            <person name="Katoh M."/>
            <person name="Kawasawa Y."/>
            <person name="Kelso J."/>
            <person name="Kitamura H."/>
            <person name="Kitano H."/>
            <person name="Kollias G."/>
            <person name="Krishnan S.P."/>
            <person name="Kruger A."/>
            <person name="Kummerfeld S.K."/>
            <person name="Kurochkin I.V."/>
            <person name="Lareau L.F."/>
            <person name="Lazarevic D."/>
            <person name="Lipovich L."/>
            <person name="Liu J."/>
            <person name="Liuni S."/>
            <person name="McWilliam S."/>
            <person name="Madan Babu M."/>
            <person name="Madera M."/>
            <person name="Marchionni L."/>
            <person name="Matsuda H."/>
            <person name="Matsuzawa S."/>
            <person name="Miki H."/>
            <person name="Mignone F."/>
            <person name="Miyake S."/>
            <person name="Morris K."/>
            <person name="Mottagui-Tabar S."/>
            <person name="Mulder N."/>
            <person name="Nakano N."/>
            <person name="Nakauchi H."/>
            <person name="Ng P."/>
            <person name="Nilsson R."/>
            <person name="Nishiguchi S."/>
            <person name="Nishikawa S."/>
            <person name="Nori F."/>
            <person name="Ohara O."/>
            <person name="Okazaki Y."/>
            <person name="Orlando V."/>
            <person name="Pang K.C."/>
            <person name="Pavan W.J."/>
            <person name="Pavesi G."/>
            <person name="Pesole G."/>
            <person name="Petrovsky N."/>
            <person name="Piazza S."/>
            <person name="Reed J."/>
            <person name="Reid J.F."/>
            <person name="Ring B.Z."/>
            <person name="Ringwald M."/>
            <person name="Rost B."/>
            <person name="Ruan Y."/>
            <person name="Salzberg S.L."/>
            <person name="Sandelin A."/>
            <person name="Schneider C."/>
            <person name="Schoenbach C."/>
            <person name="Sekiguchi K."/>
            <person name="Semple C.A."/>
            <person name="Seno S."/>
            <person name="Sessa L."/>
            <person name="Sheng Y."/>
            <person name="Shibata Y."/>
            <person name="Shimada H."/>
            <person name="Shimada K."/>
            <person name="Silva D."/>
            <person name="Sinclair B."/>
            <person name="Sperling S."/>
            <person name="Stupka E."/>
            <person name="Sugiura K."/>
            <person name="Sultana R."/>
            <person name="Takenaka Y."/>
            <person name="Taki K."/>
            <person name="Tammoja K."/>
            <person name="Tan S.L."/>
            <person name="Tang S."/>
            <person name="Taylor M.S."/>
            <person name="Tegner J."/>
            <person name="Teichmann S.A."/>
            <person name="Ueda H.R."/>
            <person name="van Nimwegen E."/>
            <person name="Verardo R."/>
            <person name="Wei C.L."/>
            <person name="Yagi K."/>
            <person name="Yamanishi H."/>
            <person name="Zabarovsky E."/>
            <person name="Zhu S."/>
            <person name="Zimmer A."/>
            <person name="Hide W."/>
            <person name="Bult C."/>
            <person name="Grimmond S.M."/>
            <person name="Teasdale R.D."/>
            <person name="Liu E.T."/>
            <person name="Brusic V."/>
            <person name="Quackenbush J."/>
            <person name="Wahlestedt C."/>
            <person name="Mattick J.S."/>
            <person name="Hume D.A."/>
            <person name="Kai C."/>
            <person name="Sasaki D."/>
            <person name="Tomaru Y."/>
            <person name="Fukuda S."/>
            <person name="Kanamori-Katayama M."/>
            <person name="Suzuki M."/>
            <person name="Aoki J."/>
            <person name="Arakawa T."/>
            <person name="Iida J."/>
            <person name="Imamura K."/>
            <person name="Itoh M."/>
            <person name="Kato T."/>
            <person name="Kawaji H."/>
            <person name="Kawagashira N."/>
            <person name="Kawashima T."/>
            <person name="Kojima M."/>
            <person name="Kondo S."/>
            <person name="Konno H."/>
            <person name="Nakano K."/>
            <person name="Ninomiya N."/>
            <person name="Nishio T."/>
            <person name="Okada M."/>
            <person name="Plessy C."/>
            <person name="Shibata K."/>
            <person name="Shiraki T."/>
            <person name="Suzuki S."/>
            <person name="Tagami M."/>
            <person name="Waki K."/>
            <person name="Watahiki A."/>
            <person name="Okamura-Oho Y."/>
            <person name="Suzuki H."/>
            <person name="Kawai J."/>
            <person name="Hayashizaki Y."/>
        </authorList>
    </citation>
    <scope>NUCLEOTIDE SEQUENCE [LARGE SCALE MRNA]</scope>
    <source>
        <strain>NOD</strain>
        <tissue>Spleen</tissue>
    </source>
</reference>
<reference key="4">
    <citation type="submission" date="2005-07" db="EMBL/GenBank/DDBJ databases">
        <authorList>
            <person name="Mural R.J."/>
            <person name="Adams M.D."/>
            <person name="Myers E.W."/>
            <person name="Smith H.O."/>
            <person name="Venter J.C."/>
        </authorList>
    </citation>
    <scope>NUCLEOTIDE SEQUENCE [LARGE SCALE GENOMIC DNA]</scope>
</reference>
<reference key="5">
    <citation type="journal article" date="1989" name="J. Immunol.">
        <title>Isolation of cDNAs encoding the CD19 antigen of human and mouse B lymphocytes. A new member of the immunoglobulin superfamily.</title>
        <authorList>
            <person name="Tedder T.F."/>
            <person name="Isaacs C.M."/>
        </authorList>
    </citation>
    <scope>NUCLEOTIDE SEQUENCE [GENOMIC DNA] OF 302-547</scope>
    <source>
        <strain>BALB/cJ</strain>
        <tissue>Spleen</tissue>
    </source>
</reference>
<reference key="6">
    <citation type="journal article" date="1992" name="Mol. Cell. Biol.">
        <title>The promoter of the CD19 gene is a target for the B-cell-specific transcription factor BSAP.</title>
        <authorList>
            <person name="Kozmik Z."/>
            <person name="Wang S."/>
            <person name="Doerfler P."/>
            <person name="Adams B."/>
            <person name="Busslinger M."/>
        </authorList>
    </citation>
    <scope>NUCLEOTIDE SEQUENCE [GENOMIC DNA] OF 1-26</scope>
</reference>
<reference key="7">
    <citation type="journal article" date="1995" name="Immunity">
        <title>Abnormal B lymphocyte development, activation, and differentiation in mice that lack or overexpress the CD19 signal transduction molecule.</title>
        <authorList>
            <person name="Engel P."/>
            <person name="Zhou L.J."/>
            <person name="Ord D.C."/>
            <person name="Sato S."/>
            <person name="Koller B."/>
            <person name="Tedder T.F."/>
        </authorList>
    </citation>
    <scope>FUNCTION</scope>
    <scope>DISRUPTION PHENOTYPE</scope>
    <scope>TISSUE SPECIFICITY</scope>
</reference>
<reference key="8">
    <citation type="journal article" date="1995" name="Nature">
        <title>Impairment of T-cell-dependent B-cell responses and B-1 cell development in CD19-deficient mice.</title>
        <authorList>
            <person name="Rickert R.C."/>
            <person name="Rajewsky K."/>
            <person name="Roes J."/>
        </authorList>
    </citation>
    <scope>FUNCTION</scope>
    <scope>SUBCELLULAR LOCATION</scope>
    <scope>DISRUPTION PHENOTYPE</scope>
    <scope>TISSUE SPECIFICITY</scope>
</reference>
<reference key="9">
    <citation type="journal article" date="1997" name="J. Exp. Med.">
        <title>Qualitative regulation of B cell antigen receptor signaling by CD19: selective requirement for PI3-kinase activation, inositol-1,4,5-trisphosphate production and Ca2+ mobilization.</title>
        <authorList>
            <person name="Buhl A.M."/>
            <person name="Pleiman C.M."/>
            <person name="Rickert R.C."/>
            <person name="Cambier J.C."/>
        </authorList>
    </citation>
    <scope>FUNCTION</scope>
</reference>
<reference key="10">
    <citation type="journal article" date="1997" name="J. Immunol.">
        <title>Regulation of B lymphocyte development and activation by the CD19/CD21/CD81/Leu 13 complex requires the cytoplasmic domain of CD19.</title>
        <authorList>
            <person name="Sato S."/>
            <person name="Miller A.S."/>
            <person name="Howard M.C."/>
            <person name="Tedder T.F."/>
        </authorList>
    </citation>
    <scope>FUNCTION</scope>
    <scope>DISRUPTION PHENOTYPE</scope>
</reference>
<reference key="11">
    <citation type="journal article" date="2002" name="Immunity">
        <title>The physiologic role of CD19 cytoplasmic tyrosines.</title>
        <authorList>
            <person name="Wang Y."/>
            <person name="Brooks S.R."/>
            <person name="Li X."/>
            <person name="Anzelon A.N."/>
            <person name="Rickert R.C."/>
            <person name="Carter R.H."/>
        </authorList>
    </citation>
    <scope>FUNCTION</scope>
    <scope>DISRUPTION PHENOTYPE</scope>
    <scope>SUBCELLULAR LOCATION</scope>
    <scope>TISSUE SPECIFICITY</scope>
</reference>
<reference key="12">
    <citation type="journal article" date="2004" name="Rapid Commun. Mass Spectrom.">
        <title>Phosphoproteome analysis of mouse liver using immobilized metal affinity purification and linear ion trap mass spectrometry.</title>
        <authorList>
            <person name="Jin W.-H."/>
            <person name="Dai J."/>
            <person name="Zhou H."/>
            <person name="Xia Q.-C."/>
            <person name="Zou H.-F."/>
            <person name="Zeng R."/>
        </authorList>
    </citation>
    <scope>PHOSPHORYLATION AT SER-225</scope>
</reference>
<reference key="13">
    <citation type="journal article" date="2010" name="Cell">
        <title>A tissue-specific atlas of mouse protein phosphorylation and expression.</title>
        <authorList>
            <person name="Huttlin E.L."/>
            <person name="Jedrychowski M.P."/>
            <person name="Elias J.E."/>
            <person name="Goswami T."/>
            <person name="Rad R."/>
            <person name="Beausoleil S.A."/>
            <person name="Villen J."/>
            <person name="Haas W."/>
            <person name="Sowa M.E."/>
            <person name="Gygi S.P."/>
        </authorList>
    </citation>
    <scope>PHOSPHORYLATION [LARGE SCALE ANALYSIS] AT TYR-493</scope>
    <scope>IDENTIFICATION BY MASS SPECTROMETRY [LARGE SCALE ANALYSIS]</scope>
    <source>
        <tissue>Spleen</tissue>
    </source>
</reference>
<reference key="14">
    <citation type="journal article" date="2010" name="Eur. J. Immunol.">
        <title>Differential phosphorylation of functional tyrosines in CD19 modulates B-lymphocyte activation.</title>
        <authorList>
            <person name="Ishiura N."/>
            <person name="Nakashima H."/>
            <person name="Watanabe R."/>
            <person name="Kuwano Y."/>
            <person name="Adachi T."/>
            <person name="Takahashi Y."/>
            <person name="Tsubata T."/>
            <person name="Okochi H."/>
            <person name="Tamaki K."/>
            <person name="Tedder T.F."/>
            <person name="Fujimoto M."/>
        </authorList>
    </citation>
    <scope>FUNCTION</scope>
    <scope>SUBCELLULAR LOCATION</scope>
    <scope>PHOSPHORYLATION AT TYR-402; TYR-493 AND TYR-522</scope>
    <scope>TISSUE SPECIFICITY</scope>
</reference>
<sequence>MPSPLPVSFLLFLTLVGGRPQKSLLVEVEEGGNVVLPCLPDSSPVSSEKLAWYRGNQSTPFLELSPGSPGLGLHVGSLGILLVIVNVSDHMGGFYLCQKRPPFKDIWQPAWTVNVEDSGEMFRWNASDVRDLDCDLRNRSSGSHRSTSGSQLYVWAKDHPKVWGTKPVCAPRGSSLNQSLINQDLTVAPGSTLWLSCGVPPVPVAKGSISWTHVHPRRPNVSLLSLSLGGEHPVREMWVWGSLLLLPQATALDEGTYYCLRGNLTIERHVKVIARSAVWLWLLRTGGWIVPVVTLVYVIFCMVSLVAFLYCQRAFILRRKRKRMTDPARRFFKVTPPSGNGTQNQYGNVLSLPTSTSGQAHAQRWAAGLGSVPGSYGNPRIQVQDTGAQSHETGLEEEGEAYEEPDSEEGSEFYENDSNLGQDQVSQDGSGYENPEDEPMGPEEEDSFSNAESYENADEELAQPVGRMMDFLSPHGSAWDPSREASSLGSQSYEDMRGILYAAPQLHSIQSGPSHEEDADSYENMDKSDDLEPAWEGEGHMGTWGTT</sequence>
<evidence type="ECO:0000250" key="1">
    <source>
        <dbReference type="UniProtKB" id="P15391"/>
    </source>
</evidence>
<evidence type="ECO:0000255" key="2"/>
<evidence type="ECO:0000256" key="3">
    <source>
        <dbReference type="SAM" id="MobiDB-lite"/>
    </source>
</evidence>
<evidence type="ECO:0000269" key="4">
    <source>
    </source>
</evidence>
<evidence type="ECO:0000269" key="5">
    <source>
    </source>
</evidence>
<evidence type="ECO:0000269" key="6">
    <source>
    </source>
</evidence>
<evidence type="ECO:0000269" key="7">
    <source>
    </source>
</evidence>
<evidence type="ECO:0000269" key="8">
    <source>
    </source>
</evidence>
<evidence type="ECO:0000269" key="9">
    <source>
    </source>
</evidence>
<evidence type="ECO:0000269" key="10">
    <source>
    </source>
</evidence>
<evidence type="ECO:0000305" key="11"/>
<evidence type="ECO:0007744" key="12">
    <source>
    </source>
</evidence>
<comment type="function">
    <text evidence="1 4 6 7 8 9 10">Functions as a coreceptor for the B-cell antigen receptor complex (BCR) on B-lymphocytes. Decreases the threshold for activation of downstream signaling pathways and for triggering B-cell responses to antigens (By similarity). Activates signaling pathways that lead to the activation of phosphatidylinositol 3-kinase and the mobilization of intracellular Ca(2+) stores (PubMed:12387743, PubMed:20101619, PubMed:9382888). Is not required for early steps during B cell differentiation in the blood marrow (PubMed:7542548, PubMed:7543183, PubMed:9317126). Required for normal differentiation of B-1 cells (PubMed:12387743, PubMed:7542548, PubMed:7543183). Required for normal B cell differentiation and proliferation in response to antigen challenges (PubMed:12387743, PubMed:7542548, PubMed:9317126). Required for normal levels of serum immunoglobulins, and for production of high-affinity antibodies in response to antigen challenge (PubMed:12387743, PubMed:7542548, PubMed:7543183).</text>
</comment>
<comment type="subunit">
    <text evidence="1">Interacts with CR2/CD21. Part of a complex composed of CD19, CR2/CD21, CD81 and IFITM1/CD225 in the membrane of mature B-cells. Interacts directly with CD81 (via the second extracellular domain); this interaction is initiated early during biosynthesis in the ER/pre-Golgi compartments and is essential for trafficking and compartmentalization of CD19 receptor on the cell surface of when phosphorylated on Tyr-346 and/or Tyr-376. Interacts with PLCG2 when phosphorylated on Tyr-402. Interacts with LYN. Interacts (when tyrosine phosphorylated) with the regulatory p85 subunit of phosphatidylinositol 3-kinase (PIK3R1 or PIK3R2). Interacts with GRB2.</text>
</comment>
<comment type="subcellular location">
    <subcellularLocation>
        <location evidence="4 6 8">Cell membrane</location>
        <topology evidence="11">Single-pass type I membrane protein</topology>
    </subcellularLocation>
    <subcellularLocation>
        <location evidence="6">Membrane raft</location>
        <topology evidence="11">Single-pass type I membrane protein</topology>
    </subcellularLocation>
</comment>
<comment type="tissue specificity">
    <text evidence="4 6 7 8">Detected on B cells in spleen, bone marrow, thymus and lymph nodes (PubMed:12387743, PubMed:20101619, PubMed:7542548). Detected on peripheral blood lymphocytes (at protein level) (PubMed:7543183).</text>
</comment>
<comment type="PTM">
    <text evidence="1 6">Phosphorylated on tyrosine following B-cell activation (PubMed:20101619). Phosphorylated on tyrosine residues by LYN (By similarity). Tyrosine residues are phosphorylated sequentially after activation of the B cell receptor. Phosphorylation of Tyr-522 is extremely rapid, followed by phosphorylation at Tyr-402. In contrast, phosphorylation of Tyr-493 appears more slowly and is more transient, returning rapidly to basal levels (PubMed:20101619).</text>
</comment>
<comment type="disruption phenotype">
    <text evidence="4 7 8 9">Mutant mice are born at the expected Mendelian ratio, thrive and are fertile (PubMed:7542548). Mutant mice display normal differentiation and expansion of pro-B cells, pre-B cells, immature B cells and resting mature B cells in bone marrow (PubMed:7542548, PubMed:7543183, PubMed:9317126). Number and surface phenotype of conventional B cells in spleen, Peyer's patch and lymph nodes appear normal (PubMed:7543183). In contrast, the numbers of B-1 cells are decreased to 10-20% of the normal values in the peritoneal cavity, together with a severe reduction of serum IgM levels (PubMed:12387743, PubMed:7542548, PubMed:7543183). Likewise, mutant mice display severely reduced serum IgG1 and IgE levels (PubMed:7543183). Mutant mice display severely reduced B cell responses to antigens, with a strong decrease in the production of serum antibodies after an antigenic challenge, and defective production of high-affinity antibodies (PubMed:7543183).</text>
</comment>